<organism>
    <name type="scientific">Citrobacter koseri (strain ATCC BAA-895 / CDC 4225-83 / SGSC4696)</name>
    <dbReference type="NCBI Taxonomy" id="290338"/>
    <lineage>
        <taxon>Bacteria</taxon>
        <taxon>Pseudomonadati</taxon>
        <taxon>Pseudomonadota</taxon>
        <taxon>Gammaproteobacteria</taxon>
        <taxon>Enterobacterales</taxon>
        <taxon>Enterobacteriaceae</taxon>
        <taxon>Citrobacter</taxon>
    </lineage>
</organism>
<accession>A8AGR7</accession>
<keyword id="KW-0997">Cell inner membrane</keyword>
<keyword id="KW-1003">Cell membrane</keyword>
<keyword id="KW-0472">Membrane</keyword>
<keyword id="KW-1185">Reference proteome</keyword>
<keyword id="KW-0762">Sugar transport</keyword>
<keyword id="KW-0812">Transmembrane</keyword>
<keyword id="KW-1133">Transmembrane helix</keyword>
<keyword id="KW-0813">Transport</keyword>
<sequence>MTTNTVSRKVAWLRVVTLAIAAFIFNTTEFVPVGLLSDIARSFAMPTAQVGIMLTIYAWVVALMSLPFMLLTSQVERRKLLICLFVLFIASHVLSFLAWNFTVLVISRIGIAFAHAVFWSITASLAIRLAPPGKRAQALSLIATGTALAMVLGLPIGRIVGQYFGWRTTFFAIGIGALITLVCLIKLLPKLPSEHSGSLKSLPLLFRRPALMSIYLLTVVVVTAHYTAYSYIEPFVQTVAGLSANFATVLLLILGGAGIIGSVVFGKLGNQYASPLISIAIMLLVICLMLLLPAADSESHLAVLSIFWGIAIMVIGLGMQVKVLALAPDATDVAMALFSGIFNIGIGAGALVGNQVSLHWSMSTIGYVGAVPALAALVWSIIIFRRWPVSLEEQPQH</sequence>
<comment type="function">
    <text evidence="1">Involved in the efflux of sugars. The physiological role may be the reduction of the intracellular concentration of toxic sugars or sugar metabolites.</text>
</comment>
<comment type="subcellular location">
    <subcellularLocation>
        <location evidence="1">Cell inner membrane</location>
        <topology evidence="1">Multi-pass membrane protein</topology>
    </subcellularLocation>
</comment>
<comment type="similarity">
    <text evidence="1">Belongs to the major facilitator superfamily. SotB (TC 2.A.1.2) family.</text>
</comment>
<dbReference type="EMBL" id="CP000822">
    <property type="protein sequence ID" value="ABV12680.1"/>
    <property type="molecule type" value="Genomic_DNA"/>
</dbReference>
<dbReference type="RefSeq" id="WP_012132421.1">
    <property type="nucleotide sequence ID" value="NC_009792.1"/>
</dbReference>
<dbReference type="SMR" id="A8AGR7"/>
<dbReference type="STRING" id="290338.CKO_01548"/>
<dbReference type="GeneID" id="45135612"/>
<dbReference type="KEGG" id="cko:CKO_01548"/>
<dbReference type="HOGENOM" id="CLU_001265_61_1_6"/>
<dbReference type="OrthoDB" id="9788453at2"/>
<dbReference type="Proteomes" id="UP000008148">
    <property type="component" value="Chromosome"/>
</dbReference>
<dbReference type="GO" id="GO:0005886">
    <property type="term" value="C:plasma membrane"/>
    <property type="evidence" value="ECO:0007669"/>
    <property type="project" value="UniProtKB-SubCell"/>
</dbReference>
<dbReference type="GO" id="GO:0015144">
    <property type="term" value="F:carbohydrate transmembrane transporter activity"/>
    <property type="evidence" value="ECO:0007669"/>
    <property type="project" value="UniProtKB-UniRule"/>
</dbReference>
<dbReference type="CDD" id="cd17324">
    <property type="entry name" value="MFS_NepI_like"/>
    <property type="match status" value="1"/>
</dbReference>
<dbReference type="Gene3D" id="1.20.1250.20">
    <property type="entry name" value="MFS general substrate transporter like domains"/>
    <property type="match status" value="1"/>
</dbReference>
<dbReference type="HAMAP" id="MF_00517">
    <property type="entry name" value="MFS_SotB"/>
    <property type="match status" value="1"/>
</dbReference>
<dbReference type="InterPro" id="IPR011701">
    <property type="entry name" value="MFS"/>
</dbReference>
<dbReference type="InterPro" id="IPR020846">
    <property type="entry name" value="MFS_dom"/>
</dbReference>
<dbReference type="InterPro" id="IPR050189">
    <property type="entry name" value="MFS_Efflux_Transporters"/>
</dbReference>
<dbReference type="InterPro" id="IPR036259">
    <property type="entry name" value="MFS_trans_sf"/>
</dbReference>
<dbReference type="InterPro" id="IPR023495">
    <property type="entry name" value="Sugar_effux_transptr_put"/>
</dbReference>
<dbReference type="NCBIfam" id="NF002921">
    <property type="entry name" value="PRK03545.1"/>
    <property type="match status" value="1"/>
</dbReference>
<dbReference type="PANTHER" id="PTHR43124">
    <property type="entry name" value="PURINE EFFLUX PUMP PBUE"/>
    <property type="match status" value="1"/>
</dbReference>
<dbReference type="PANTHER" id="PTHR43124:SF4">
    <property type="entry name" value="SUGAR EFFLUX TRANSPORTER"/>
    <property type="match status" value="1"/>
</dbReference>
<dbReference type="Pfam" id="PF07690">
    <property type="entry name" value="MFS_1"/>
    <property type="match status" value="1"/>
</dbReference>
<dbReference type="SUPFAM" id="SSF103473">
    <property type="entry name" value="MFS general substrate transporter"/>
    <property type="match status" value="1"/>
</dbReference>
<dbReference type="PROSITE" id="PS50850">
    <property type="entry name" value="MFS"/>
    <property type="match status" value="1"/>
</dbReference>
<reference key="1">
    <citation type="submission" date="2007-08" db="EMBL/GenBank/DDBJ databases">
        <authorList>
            <consortium name="The Citrobacter koseri Genome Sequencing Project"/>
            <person name="McClelland M."/>
            <person name="Sanderson E.K."/>
            <person name="Porwollik S."/>
            <person name="Spieth J."/>
            <person name="Clifton W.S."/>
            <person name="Latreille P."/>
            <person name="Courtney L."/>
            <person name="Wang C."/>
            <person name="Pepin K."/>
            <person name="Bhonagiri V."/>
            <person name="Nash W."/>
            <person name="Johnson M."/>
            <person name="Thiruvilangam P."/>
            <person name="Wilson R."/>
        </authorList>
    </citation>
    <scope>NUCLEOTIDE SEQUENCE [LARGE SCALE GENOMIC DNA]</scope>
    <source>
        <strain>ATCC BAA-895 / CDC 4225-83 / SGSC4696</strain>
    </source>
</reference>
<evidence type="ECO:0000255" key="1">
    <source>
        <dbReference type="HAMAP-Rule" id="MF_00517"/>
    </source>
</evidence>
<name>SOTB_CITK8</name>
<gene>
    <name evidence="1" type="primary">sotB</name>
    <name type="ordered locus">CKO_01548</name>
</gene>
<proteinExistence type="inferred from homology"/>
<feature type="chain" id="PRO_1000050796" description="Probable sugar efflux transporter">
    <location>
        <begin position="1"/>
        <end position="397"/>
    </location>
</feature>
<feature type="transmembrane region" description="Helical" evidence="1">
    <location>
        <begin position="15"/>
        <end position="35"/>
    </location>
</feature>
<feature type="transmembrane region" description="Helical" evidence="1">
    <location>
        <begin position="50"/>
        <end position="70"/>
    </location>
</feature>
<feature type="transmembrane region" description="Helical" evidence="1">
    <location>
        <begin position="81"/>
        <end position="101"/>
    </location>
</feature>
<feature type="transmembrane region" description="Helical" evidence="1">
    <location>
        <begin position="103"/>
        <end position="123"/>
    </location>
</feature>
<feature type="transmembrane region" description="Helical" evidence="1">
    <location>
        <begin position="136"/>
        <end position="156"/>
    </location>
</feature>
<feature type="transmembrane region" description="Helical" evidence="1">
    <location>
        <begin position="169"/>
        <end position="189"/>
    </location>
</feature>
<feature type="transmembrane region" description="Helical" evidence="1">
    <location>
        <begin position="209"/>
        <end position="229"/>
    </location>
</feature>
<feature type="transmembrane region" description="Helical" evidence="1">
    <location>
        <begin position="246"/>
        <end position="266"/>
    </location>
</feature>
<feature type="transmembrane region" description="Helical" evidence="1">
    <location>
        <begin position="275"/>
        <end position="295"/>
    </location>
</feature>
<feature type="transmembrane region" description="Helical" evidence="1">
    <location>
        <begin position="301"/>
        <end position="321"/>
    </location>
</feature>
<feature type="transmembrane region" description="Helical" evidence="1">
    <location>
        <begin position="333"/>
        <end position="353"/>
    </location>
</feature>
<feature type="transmembrane region" description="Helical" evidence="1">
    <location>
        <begin position="364"/>
        <end position="384"/>
    </location>
</feature>
<protein>
    <recommendedName>
        <fullName evidence="1">Probable sugar efflux transporter</fullName>
    </recommendedName>
</protein>